<protein>
    <recommendedName>
        <fullName evidence="4">Prostate and testis expressed protein 13</fullName>
    </recommendedName>
    <alternativeName>
        <fullName evidence="3">Prostate and testis expressed protein X</fullName>
    </alternativeName>
</protein>
<reference evidence="7" key="1">
    <citation type="journal article" date="2009" name="PLoS Biol.">
        <title>Lineage-specific biology revealed by a finished genome assembly of the mouse.</title>
        <authorList>
            <person name="Church D.M."/>
            <person name="Goodstadt L."/>
            <person name="Hillier L.W."/>
            <person name="Zody M.C."/>
            <person name="Goldstein S."/>
            <person name="She X."/>
            <person name="Bult C.J."/>
            <person name="Agarwala R."/>
            <person name="Cherry J.L."/>
            <person name="DiCuccio M."/>
            <person name="Hlavina W."/>
            <person name="Kapustin Y."/>
            <person name="Meric P."/>
            <person name="Maglott D."/>
            <person name="Birtle Z."/>
            <person name="Marques A.C."/>
            <person name="Graves T."/>
            <person name="Zhou S."/>
            <person name="Teague B."/>
            <person name="Potamousis K."/>
            <person name="Churas C."/>
            <person name="Place M."/>
            <person name="Herschleb J."/>
            <person name="Runnheim R."/>
            <person name="Forrest D."/>
            <person name="Amos-Landgraf J."/>
            <person name="Schwartz D.C."/>
            <person name="Cheng Z."/>
            <person name="Lindblad-Toh K."/>
            <person name="Eichler E.E."/>
            <person name="Ponting C.P."/>
        </authorList>
    </citation>
    <scope>NUCLEOTIDE SEQUENCE [LARGE SCALE GENOMIC DNA]</scope>
    <source>
        <strain evidence="7">C57BL/6J</strain>
    </source>
</reference>
<reference evidence="5" key="2">
    <citation type="journal article" date="2011" name="Reprod. Biol. Endocrinol.">
        <title>Members of the murine Pate family are predominantly expressed in the epididymis in a segment-specific fashion and regulated by androgens and other testicular factors.</title>
        <authorList>
            <person name="Turunen H.T."/>
            <person name="Sipilae P."/>
            <person name="Pujianto D.A."/>
            <person name="Damdimopoulos A.E."/>
            <person name="Bjoerkgren I."/>
            <person name="Huhtaniemi I."/>
            <person name="Poutanen M."/>
        </authorList>
    </citation>
    <scope>IDENTIFICATION</scope>
    <scope>TISSUE SPECIFICITY</scope>
</reference>
<reference evidence="5" key="3">
    <citation type="journal article" date="2016" name="Hum. Genomics">
        <title>Organization, evolution and functions of the human and mouse Ly6/uPAR family genes.</title>
        <authorList>
            <person name="Loughner C.L."/>
            <person name="Bruford E.A."/>
            <person name="McAndrews M.S."/>
            <person name="Delp E.E."/>
            <person name="Swamynathan S."/>
            <person name="Swamynathan S.K."/>
        </authorList>
    </citation>
    <scope>NOMENCLATURE</scope>
</reference>
<comment type="subcellular location">
    <subcellularLocation>
        <location evidence="5">Secreted</location>
    </subcellularLocation>
</comment>
<comment type="tissue specificity">
    <text evidence="2">Strongly expressed in the epididymis, including the initial segment, caput, corpus and cauda regions. Weakly expressed in prostate.</text>
</comment>
<comment type="similarity">
    <text evidence="5">Belongs to the PATE family.</text>
</comment>
<dbReference type="EMBL" id="AC157512">
    <property type="status" value="NOT_ANNOTATED_CDS"/>
    <property type="molecule type" value="Genomic_DNA"/>
</dbReference>
<dbReference type="RefSeq" id="NP_001365151.1">
    <property type="nucleotide sequence ID" value="NM_001378222.1"/>
</dbReference>
<dbReference type="RefSeq" id="XP_006510783.1">
    <property type="nucleotide sequence ID" value="XM_006510720.3"/>
</dbReference>
<dbReference type="FunCoup" id="D3YWX3">
    <property type="interactions" value="371"/>
</dbReference>
<dbReference type="STRING" id="10090.ENSMUSP00000135716"/>
<dbReference type="GlyCosmos" id="D3YWX3">
    <property type="glycosylation" value="1 site, No reported glycans"/>
</dbReference>
<dbReference type="GlyGen" id="D3YWX3">
    <property type="glycosylation" value="1 site"/>
</dbReference>
<dbReference type="PaxDb" id="10090-ENSMUSP00000135716"/>
<dbReference type="ProteomicsDB" id="353725"/>
<dbReference type="Ensembl" id="ENSMUST00000176153.2">
    <property type="protein sequence ID" value="ENSMUSP00000135716.2"/>
    <property type="gene ID" value="ENSMUSG00000078934.5"/>
</dbReference>
<dbReference type="GeneID" id="77908"/>
<dbReference type="AGR" id="MGI:1925158"/>
<dbReference type="MGI" id="MGI:1925158">
    <property type="gene designation" value="Pate13"/>
</dbReference>
<dbReference type="VEuPathDB" id="HostDB:ENSMUSG00000078934"/>
<dbReference type="eggNOG" id="ENOG502T3XN">
    <property type="taxonomic scope" value="Eukaryota"/>
</dbReference>
<dbReference type="GeneTree" id="ENSGT00510000050363"/>
<dbReference type="HOGENOM" id="CLU_152947_0_0_1"/>
<dbReference type="InParanoid" id="D3YWX3"/>
<dbReference type="OMA" id="TTCCINQ"/>
<dbReference type="OrthoDB" id="9830410at2759"/>
<dbReference type="PhylomeDB" id="D3YWX3"/>
<dbReference type="TreeFam" id="TF343311"/>
<dbReference type="BioGRID-ORCS" id="77908">
    <property type="hits" value="0 hits in 37 CRISPR screens"/>
</dbReference>
<dbReference type="PRO" id="PR:D3YWX3"/>
<dbReference type="Proteomes" id="UP000000589">
    <property type="component" value="Chromosome 9"/>
</dbReference>
<dbReference type="RNAct" id="D3YWX3">
    <property type="molecule type" value="protein"/>
</dbReference>
<dbReference type="Bgee" id="ENSMUSG00000078934">
    <property type="expression patterns" value="Expressed in spermatid and 3 other cell types or tissues"/>
</dbReference>
<dbReference type="ExpressionAtlas" id="D3YWX3">
    <property type="expression patterns" value="baseline and differential"/>
</dbReference>
<dbReference type="GO" id="GO:0005576">
    <property type="term" value="C:extracellular region"/>
    <property type="evidence" value="ECO:0007669"/>
    <property type="project" value="UniProtKB-SubCell"/>
</dbReference>
<dbReference type="CDD" id="cd23578">
    <property type="entry name" value="TFP_LU_ECD_PATE2"/>
    <property type="match status" value="1"/>
</dbReference>
<dbReference type="InterPro" id="IPR016054">
    <property type="entry name" value="LY6_UPA_recep-like"/>
</dbReference>
<dbReference type="Pfam" id="PF00021">
    <property type="entry name" value="UPAR_LY6"/>
    <property type="match status" value="1"/>
</dbReference>
<organism evidence="7">
    <name type="scientific">Mus musculus</name>
    <name type="common">Mouse</name>
    <dbReference type="NCBI Taxonomy" id="10090"/>
    <lineage>
        <taxon>Eukaryota</taxon>
        <taxon>Metazoa</taxon>
        <taxon>Chordata</taxon>
        <taxon>Craniata</taxon>
        <taxon>Vertebrata</taxon>
        <taxon>Euteleostomi</taxon>
        <taxon>Mammalia</taxon>
        <taxon>Eutheria</taxon>
        <taxon>Euarchontoglires</taxon>
        <taxon>Glires</taxon>
        <taxon>Rodentia</taxon>
        <taxon>Myomorpha</taxon>
        <taxon>Muroidea</taxon>
        <taxon>Muridae</taxon>
        <taxon>Murinae</taxon>
        <taxon>Mus</taxon>
        <taxon>Mus</taxon>
    </lineage>
</organism>
<proteinExistence type="evidence at transcript level"/>
<name>PAT13_MOUSE</name>
<accession>D3YWX3</accession>
<feature type="signal peptide" evidence="1">
    <location>
        <begin position="1"/>
        <end position="20"/>
    </location>
</feature>
<feature type="chain" id="PRO_5003053096" description="Prostate and testis expressed protein 13" evidence="1">
    <location>
        <begin position="21"/>
        <end position="137"/>
    </location>
</feature>
<feature type="domain" description="UPAR/Ly6" evidence="5">
    <location>
        <begin position="28"/>
        <end position="114"/>
    </location>
</feature>
<feature type="glycosylation site" description="N-linked (GlcNAc...) asparagine" evidence="1">
    <location>
        <position position="57"/>
    </location>
</feature>
<feature type="disulfide bond" evidence="1">
    <location>
        <begin position="30"/>
        <end position="60"/>
    </location>
</feature>
<feature type="disulfide bond" evidence="1">
    <location>
        <begin position="33"/>
        <end position="41"/>
    </location>
</feature>
<feature type="disulfide bond" evidence="1">
    <location>
        <begin position="48"/>
        <end position="84"/>
    </location>
</feature>
<feature type="disulfide bond" evidence="1">
    <location>
        <begin position="87"/>
        <end position="104"/>
    </location>
</feature>
<feature type="disulfide bond" evidence="1">
    <location>
        <begin position="105"/>
        <end position="111"/>
    </location>
</feature>
<evidence type="ECO:0000255" key="1"/>
<evidence type="ECO:0000269" key="2">
    <source>
    </source>
</evidence>
<evidence type="ECO:0000303" key="3">
    <source>
    </source>
</evidence>
<evidence type="ECO:0000303" key="4">
    <source>
    </source>
</evidence>
<evidence type="ECO:0000305" key="5"/>
<evidence type="ECO:0000312" key="6">
    <source>
        <dbReference type="MGI" id="MGI:1925158"/>
    </source>
</evidence>
<evidence type="ECO:0000312" key="7">
    <source>
        <dbReference type="Proteomes" id="UP000000589"/>
    </source>
</evidence>
<sequence>MFQKLLLSVFIILLMDVGERVLTFNLLRHCNLCSHYDGFKCRNGMKSCWKFDLWTQNRTCTTENYYYYDRFTGLYLFRYAKLNCKPCAPGMYQMFHDLLRETFCCIDRNYCNDGTANLDTSSILIEDMNQKKELNDD</sequence>
<gene>
    <name evidence="4" type="primary">Pate13</name>
    <name evidence="6" type="synonym">Gm3867</name>
    <name evidence="3" type="synonym">Pate-X</name>
</gene>
<keyword id="KW-1015">Disulfide bond</keyword>
<keyword id="KW-0325">Glycoprotein</keyword>
<keyword id="KW-1185">Reference proteome</keyword>
<keyword id="KW-0964">Secreted</keyword>
<keyword id="KW-0732">Signal</keyword>